<comment type="function">
    <text evidence="1">Involved in the biosynthesis of the chorismate, which leads to the biosynthesis of aromatic amino acids. Catalyzes the reversible NADPH linked reduction of 3-dehydroshikimate (DHSA) to yield shikimate (SA).</text>
</comment>
<comment type="catalytic activity">
    <reaction evidence="1">
        <text>shikimate + NADP(+) = 3-dehydroshikimate + NADPH + H(+)</text>
        <dbReference type="Rhea" id="RHEA:17737"/>
        <dbReference type="ChEBI" id="CHEBI:15378"/>
        <dbReference type="ChEBI" id="CHEBI:16630"/>
        <dbReference type="ChEBI" id="CHEBI:36208"/>
        <dbReference type="ChEBI" id="CHEBI:57783"/>
        <dbReference type="ChEBI" id="CHEBI:58349"/>
        <dbReference type="EC" id="1.1.1.25"/>
    </reaction>
</comment>
<comment type="pathway">
    <text evidence="1">Metabolic intermediate biosynthesis; chorismate biosynthesis; chorismate from D-erythrose 4-phosphate and phosphoenolpyruvate: step 4/7.</text>
</comment>
<comment type="subunit">
    <text evidence="1">Homodimer.</text>
</comment>
<comment type="similarity">
    <text evidence="1">Belongs to the shikimate dehydrogenase family.</text>
</comment>
<sequence length="268" mass="29879">MKFAVIGNPISHSLSPVMHRANFNSLGLDDTYEALNIPIEDFHLIKEIISKKELEGFNITIPHKERIIPYLDYVDEQAINAGAVNTVLIKDGKWIGYNTDGIGYVKGLHSVYPDLENAYILILGAGGASKGIAYELAKFVKPKLTVANRTMARFESWNLNINQISLADAEKYLAEFDIVINTTPAGMAGNNESIINLKHLSPNTLMSDIVYIPYKTPILEEAERKGNHIYNGLDMFVYQGAESFKIWTNKDADINSMKTAVLQQLKGE</sequence>
<protein>
    <recommendedName>
        <fullName evidence="1">Shikimate dehydrogenase (NADP(+))</fullName>
        <shortName evidence="1">SDH</shortName>
        <ecNumber evidence="1">1.1.1.25</ecNumber>
    </recommendedName>
</protein>
<organism>
    <name type="scientific">Staphylococcus aureus (strain USA300)</name>
    <dbReference type="NCBI Taxonomy" id="367830"/>
    <lineage>
        <taxon>Bacteria</taxon>
        <taxon>Bacillati</taxon>
        <taxon>Bacillota</taxon>
        <taxon>Bacilli</taxon>
        <taxon>Bacillales</taxon>
        <taxon>Staphylococcaceae</taxon>
        <taxon>Staphylococcus</taxon>
    </lineage>
</organism>
<keyword id="KW-0028">Amino-acid biosynthesis</keyword>
<keyword id="KW-0057">Aromatic amino acid biosynthesis</keyword>
<keyword id="KW-0521">NADP</keyword>
<keyword id="KW-0560">Oxidoreductase</keyword>
<evidence type="ECO:0000255" key="1">
    <source>
        <dbReference type="HAMAP-Rule" id="MF_00222"/>
    </source>
</evidence>
<dbReference type="EC" id="1.1.1.25" evidence="1"/>
<dbReference type="EMBL" id="CP000255">
    <property type="protein sequence ID" value="ABD21182.1"/>
    <property type="molecule type" value="Genomic_DNA"/>
</dbReference>
<dbReference type="RefSeq" id="WP_000666761.1">
    <property type="nucleotide sequence ID" value="NZ_CP027476.1"/>
</dbReference>
<dbReference type="SMR" id="Q2FGC8"/>
<dbReference type="KEGG" id="saa:SAUSA300_1555"/>
<dbReference type="HOGENOM" id="CLU_044063_4_1_9"/>
<dbReference type="OMA" id="FGNPIKH"/>
<dbReference type="UniPathway" id="UPA00053">
    <property type="reaction ID" value="UER00087"/>
</dbReference>
<dbReference type="Proteomes" id="UP000001939">
    <property type="component" value="Chromosome"/>
</dbReference>
<dbReference type="GO" id="GO:0005829">
    <property type="term" value="C:cytosol"/>
    <property type="evidence" value="ECO:0007669"/>
    <property type="project" value="TreeGrafter"/>
</dbReference>
<dbReference type="GO" id="GO:0050661">
    <property type="term" value="F:NADP binding"/>
    <property type="evidence" value="ECO:0007669"/>
    <property type="project" value="InterPro"/>
</dbReference>
<dbReference type="GO" id="GO:0004764">
    <property type="term" value="F:shikimate 3-dehydrogenase (NADP+) activity"/>
    <property type="evidence" value="ECO:0007669"/>
    <property type="project" value="UniProtKB-UniRule"/>
</dbReference>
<dbReference type="GO" id="GO:0008652">
    <property type="term" value="P:amino acid biosynthetic process"/>
    <property type="evidence" value="ECO:0007669"/>
    <property type="project" value="UniProtKB-KW"/>
</dbReference>
<dbReference type="GO" id="GO:0009073">
    <property type="term" value="P:aromatic amino acid family biosynthetic process"/>
    <property type="evidence" value="ECO:0007669"/>
    <property type="project" value="UniProtKB-KW"/>
</dbReference>
<dbReference type="GO" id="GO:0009423">
    <property type="term" value="P:chorismate biosynthetic process"/>
    <property type="evidence" value="ECO:0007669"/>
    <property type="project" value="UniProtKB-UniRule"/>
</dbReference>
<dbReference type="GO" id="GO:0019632">
    <property type="term" value="P:shikimate metabolic process"/>
    <property type="evidence" value="ECO:0007669"/>
    <property type="project" value="InterPro"/>
</dbReference>
<dbReference type="CDD" id="cd01065">
    <property type="entry name" value="NAD_bind_Shikimate_DH"/>
    <property type="match status" value="1"/>
</dbReference>
<dbReference type="FunFam" id="3.40.50.10860:FF:000016">
    <property type="entry name" value="Shikimate dehydrogenase (NADP(+))"/>
    <property type="match status" value="1"/>
</dbReference>
<dbReference type="FunFam" id="3.40.50.720:FF:000445">
    <property type="entry name" value="Shikimate dehydrogenase (NADP(+))"/>
    <property type="match status" value="1"/>
</dbReference>
<dbReference type="Gene3D" id="3.40.50.10860">
    <property type="entry name" value="Leucine Dehydrogenase, chain A, domain 1"/>
    <property type="match status" value="1"/>
</dbReference>
<dbReference type="Gene3D" id="3.40.50.720">
    <property type="entry name" value="NAD(P)-binding Rossmann-like Domain"/>
    <property type="match status" value="1"/>
</dbReference>
<dbReference type="HAMAP" id="MF_00222">
    <property type="entry name" value="Shikimate_DH_AroE"/>
    <property type="match status" value="1"/>
</dbReference>
<dbReference type="InterPro" id="IPR046346">
    <property type="entry name" value="Aminoacid_DH-like_N_sf"/>
</dbReference>
<dbReference type="InterPro" id="IPR036291">
    <property type="entry name" value="NAD(P)-bd_dom_sf"/>
</dbReference>
<dbReference type="InterPro" id="IPR041121">
    <property type="entry name" value="SDH_C"/>
</dbReference>
<dbReference type="InterPro" id="IPR011342">
    <property type="entry name" value="Shikimate_DH"/>
</dbReference>
<dbReference type="InterPro" id="IPR013708">
    <property type="entry name" value="Shikimate_DH-bd_N"/>
</dbReference>
<dbReference type="InterPro" id="IPR022893">
    <property type="entry name" value="Shikimate_DH_fam"/>
</dbReference>
<dbReference type="InterPro" id="IPR006151">
    <property type="entry name" value="Shikm_DH/Glu-tRNA_Rdtase"/>
</dbReference>
<dbReference type="NCBIfam" id="TIGR00507">
    <property type="entry name" value="aroE"/>
    <property type="match status" value="1"/>
</dbReference>
<dbReference type="PANTHER" id="PTHR21089:SF1">
    <property type="entry name" value="BIFUNCTIONAL 3-DEHYDROQUINATE DEHYDRATASE_SHIKIMATE DEHYDROGENASE, CHLOROPLASTIC"/>
    <property type="match status" value="1"/>
</dbReference>
<dbReference type="PANTHER" id="PTHR21089">
    <property type="entry name" value="SHIKIMATE DEHYDROGENASE"/>
    <property type="match status" value="1"/>
</dbReference>
<dbReference type="Pfam" id="PF18317">
    <property type="entry name" value="SDH_C"/>
    <property type="match status" value="1"/>
</dbReference>
<dbReference type="Pfam" id="PF01488">
    <property type="entry name" value="Shikimate_DH"/>
    <property type="match status" value="1"/>
</dbReference>
<dbReference type="Pfam" id="PF08501">
    <property type="entry name" value="Shikimate_dh_N"/>
    <property type="match status" value="1"/>
</dbReference>
<dbReference type="SUPFAM" id="SSF53223">
    <property type="entry name" value="Aminoacid dehydrogenase-like, N-terminal domain"/>
    <property type="match status" value="1"/>
</dbReference>
<dbReference type="SUPFAM" id="SSF51735">
    <property type="entry name" value="NAD(P)-binding Rossmann-fold domains"/>
    <property type="match status" value="1"/>
</dbReference>
<reference key="1">
    <citation type="journal article" date="2006" name="Lancet">
        <title>Complete genome sequence of USA300, an epidemic clone of community-acquired meticillin-resistant Staphylococcus aureus.</title>
        <authorList>
            <person name="Diep B.A."/>
            <person name="Gill S.R."/>
            <person name="Chang R.F."/>
            <person name="Phan T.H."/>
            <person name="Chen J.H."/>
            <person name="Davidson M.G."/>
            <person name="Lin F."/>
            <person name="Lin J."/>
            <person name="Carleton H.A."/>
            <person name="Mongodin E.F."/>
            <person name="Sensabaugh G.F."/>
            <person name="Perdreau-Remington F."/>
        </authorList>
    </citation>
    <scope>NUCLEOTIDE SEQUENCE [LARGE SCALE GENOMIC DNA]</scope>
    <source>
        <strain>USA300</strain>
    </source>
</reference>
<feature type="chain" id="PRO_1000021339" description="Shikimate dehydrogenase (NADP(+))">
    <location>
        <begin position="1"/>
        <end position="268"/>
    </location>
</feature>
<feature type="active site" description="Proton acceptor" evidence="1">
    <location>
        <position position="64"/>
    </location>
</feature>
<feature type="binding site" evidence="1">
    <location>
        <begin position="13"/>
        <end position="15"/>
    </location>
    <ligand>
        <name>shikimate</name>
        <dbReference type="ChEBI" id="CHEBI:36208"/>
    </ligand>
</feature>
<feature type="binding site" evidence="1">
    <location>
        <position position="60"/>
    </location>
    <ligand>
        <name>shikimate</name>
        <dbReference type="ChEBI" id="CHEBI:36208"/>
    </ligand>
</feature>
<feature type="binding site" evidence="1">
    <location>
        <position position="76"/>
    </location>
    <ligand>
        <name>NADP(+)</name>
        <dbReference type="ChEBI" id="CHEBI:58349"/>
    </ligand>
</feature>
<feature type="binding site" evidence="1">
    <location>
        <position position="85"/>
    </location>
    <ligand>
        <name>shikimate</name>
        <dbReference type="ChEBI" id="CHEBI:36208"/>
    </ligand>
</feature>
<feature type="binding site" evidence="1">
    <location>
        <position position="100"/>
    </location>
    <ligand>
        <name>shikimate</name>
        <dbReference type="ChEBI" id="CHEBI:36208"/>
    </ligand>
</feature>
<feature type="binding site" evidence="1">
    <location>
        <begin position="124"/>
        <end position="128"/>
    </location>
    <ligand>
        <name>NADP(+)</name>
        <dbReference type="ChEBI" id="CHEBI:58349"/>
    </ligand>
</feature>
<feature type="binding site" evidence="1">
    <location>
        <begin position="148"/>
        <end position="153"/>
    </location>
    <ligand>
        <name>NADP(+)</name>
        <dbReference type="ChEBI" id="CHEBI:58349"/>
    </ligand>
</feature>
<feature type="binding site" evidence="1">
    <location>
        <position position="209"/>
    </location>
    <ligand>
        <name>NADP(+)</name>
        <dbReference type="ChEBI" id="CHEBI:58349"/>
    </ligand>
</feature>
<feature type="binding site" evidence="1">
    <location>
        <position position="211"/>
    </location>
    <ligand>
        <name>shikimate</name>
        <dbReference type="ChEBI" id="CHEBI:36208"/>
    </ligand>
</feature>
<feature type="binding site" evidence="1">
    <location>
        <position position="232"/>
    </location>
    <ligand>
        <name>NADP(+)</name>
        <dbReference type="ChEBI" id="CHEBI:58349"/>
    </ligand>
</feature>
<gene>
    <name evidence="1" type="primary">aroE</name>
    <name type="ordered locus">SAUSA300_1555</name>
</gene>
<name>AROE_STAA3</name>
<proteinExistence type="inferred from homology"/>
<accession>Q2FGC8</accession>